<name>Y2176_SHEON</name>
<evidence type="ECO:0000255" key="1">
    <source>
        <dbReference type="HAMAP-Rule" id="MF_00816"/>
    </source>
</evidence>
<evidence type="ECO:0007829" key="2">
    <source>
        <dbReference type="PDB" id="2QTI"/>
    </source>
</evidence>
<comment type="similarity">
    <text evidence="1">Belongs to the UPF0352 family.</text>
</comment>
<accession>Q8EF26</accession>
<feature type="chain" id="PRO_0000201799" description="UPF0352 protein SO_2176">
    <location>
        <begin position="1"/>
        <end position="72"/>
    </location>
</feature>
<feature type="helix" evidence="2">
    <location>
        <begin position="9"/>
        <end position="26"/>
    </location>
</feature>
<feature type="helix" evidence="2">
    <location>
        <begin position="30"/>
        <end position="48"/>
    </location>
</feature>
<feature type="helix" evidence="2">
    <location>
        <begin position="51"/>
        <end position="72"/>
    </location>
</feature>
<reference key="1">
    <citation type="journal article" date="2002" name="Nat. Biotechnol.">
        <title>Genome sequence of the dissimilatory metal ion-reducing bacterium Shewanella oneidensis.</title>
        <authorList>
            <person name="Heidelberg J.F."/>
            <person name="Paulsen I.T."/>
            <person name="Nelson K.E."/>
            <person name="Gaidos E.J."/>
            <person name="Nelson W.C."/>
            <person name="Read T.D."/>
            <person name="Eisen J.A."/>
            <person name="Seshadri R."/>
            <person name="Ward N.L."/>
            <person name="Methe B.A."/>
            <person name="Clayton R.A."/>
            <person name="Meyer T."/>
            <person name="Tsapin A."/>
            <person name="Scott J."/>
            <person name="Beanan M.J."/>
            <person name="Brinkac L.M."/>
            <person name="Daugherty S.C."/>
            <person name="DeBoy R.T."/>
            <person name="Dodson R.J."/>
            <person name="Durkin A.S."/>
            <person name="Haft D.H."/>
            <person name="Kolonay J.F."/>
            <person name="Madupu R."/>
            <person name="Peterson J.D."/>
            <person name="Umayam L.A."/>
            <person name="White O."/>
            <person name="Wolf A.M."/>
            <person name="Vamathevan J.J."/>
            <person name="Weidman J.F."/>
            <person name="Impraim M."/>
            <person name="Lee K."/>
            <person name="Berry K.J."/>
            <person name="Lee C."/>
            <person name="Mueller J."/>
            <person name="Khouri H.M."/>
            <person name="Gill J."/>
            <person name="Utterback T.R."/>
            <person name="McDonald L.A."/>
            <person name="Feldblyum T.V."/>
            <person name="Smith H.O."/>
            <person name="Venter J.C."/>
            <person name="Nealson K.H."/>
            <person name="Fraser C.M."/>
        </authorList>
    </citation>
    <scope>NUCLEOTIDE SEQUENCE [LARGE SCALE GENOMIC DNA]</scope>
    <source>
        <strain>ATCC 700550 / JCM 31522 / CIP 106686 / LMG 19005 / NCIMB 14063 / MR-1</strain>
    </source>
</reference>
<gene>
    <name type="ordered locus">SO_2176</name>
</gene>
<proteinExistence type="evidence at protein level"/>
<organism>
    <name type="scientific">Shewanella oneidensis (strain ATCC 700550 / JCM 31522 / CIP 106686 / LMG 19005 / NCIMB 14063 / MR-1)</name>
    <dbReference type="NCBI Taxonomy" id="211586"/>
    <lineage>
        <taxon>Bacteria</taxon>
        <taxon>Pseudomonadati</taxon>
        <taxon>Pseudomonadota</taxon>
        <taxon>Gammaproteobacteria</taxon>
        <taxon>Alteromonadales</taxon>
        <taxon>Shewanellaceae</taxon>
        <taxon>Shewanella</taxon>
    </lineage>
</organism>
<sequence>MAIQSKYSNTQVESLIAEILVVLEKHKAPTDLSLMALGNCVTHLLERKVPSESRQAVAEQFAKALAQSVKSN</sequence>
<keyword id="KW-0002">3D-structure</keyword>
<keyword id="KW-1185">Reference proteome</keyword>
<dbReference type="EMBL" id="AE014299">
    <property type="protein sequence ID" value="AAN55220.1"/>
    <property type="molecule type" value="Genomic_DNA"/>
</dbReference>
<dbReference type="RefSeq" id="NP_717776.1">
    <property type="nucleotide sequence ID" value="NC_004347.2"/>
</dbReference>
<dbReference type="RefSeq" id="WP_011072212.1">
    <property type="nucleotide sequence ID" value="NZ_CP053946.1"/>
</dbReference>
<dbReference type="PDB" id="2JUW">
    <property type="method" value="NMR"/>
    <property type="chains" value="A/B=1-72"/>
</dbReference>
<dbReference type="PDB" id="2QTI">
    <property type="method" value="X-ray"/>
    <property type="resolution" value="2.30 A"/>
    <property type="chains" value="A=1-72"/>
</dbReference>
<dbReference type="PDBsum" id="2JUW"/>
<dbReference type="PDBsum" id="2QTI"/>
<dbReference type="BMRB" id="Q8EF26"/>
<dbReference type="SMR" id="Q8EF26"/>
<dbReference type="STRING" id="211586.SO_2176"/>
<dbReference type="PaxDb" id="211586-SO_2176"/>
<dbReference type="KEGG" id="son:SO_2176"/>
<dbReference type="PATRIC" id="fig|211586.12.peg.2092"/>
<dbReference type="eggNOG" id="COG3082">
    <property type="taxonomic scope" value="Bacteria"/>
</dbReference>
<dbReference type="HOGENOM" id="CLU_175457_0_0_6"/>
<dbReference type="OrthoDB" id="5771474at2"/>
<dbReference type="PhylomeDB" id="Q8EF26"/>
<dbReference type="BioCyc" id="SONE211586:G1GMP-1994-MONOMER"/>
<dbReference type="EvolutionaryTrace" id="Q8EF26"/>
<dbReference type="Proteomes" id="UP000008186">
    <property type="component" value="Chromosome"/>
</dbReference>
<dbReference type="Gene3D" id="1.10.3390.10">
    <property type="entry name" value="YejL-like"/>
    <property type="match status" value="1"/>
</dbReference>
<dbReference type="HAMAP" id="MF_00816">
    <property type="entry name" value="UPF0352"/>
    <property type="match status" value="1"/>
</dbReference>
<dbReference type="InterPro" id="IPR009857">
    <property type="entry name" value="UPF0352"/>
</dbReference>
<dbReference type="InterPro" id="IPR023202">
    <property type="entry name" value="YejL_sf"/>
</dbReference>
<dbReference type="NCBIfam" id="NF010242">
    <property type="entry name" value="PRK13689.1"/>
    <property type="match status" value="1"/>
</dbReference>
<dbReference type="Pfam" id="PF07208">
    <property type="entry name" value="DUF1414"/>
    <property type="match status" value="1"/>
</dbReference>
<dbReference type="PIRSF" id="PIRSF006188">
    <property type="entry name" value="UCP006188"/>
    <property type="match status" value="1"/>
</dbReference>
<dbReference type="SUPFAM" id="SSF158651">
    <property type="entry name" value="YejL-like"/>
    <property type="match status" value="1"/>
</dbReference>
<protein>
    <recommendedName>
        <fullName evidence="1">UPF0352 protein SO_2176</fullName>
    </recommendedName>
</protein>